<keyword id="KW-0963">Cytoplasm</keyword>
<keyword id="KW-0539">Nucleus</keyword>
<keyword id="KW-0597">Phosphoprotein</keyword>
<keyword id="KW-1185">Reference proteome</keyword>
<feature type="chain" id="PRO_0000385311" description="Integrator complex subunit 3 homolog">
    <location>
        <begin position="1"/>
        <end position="1079"/>
    </location>
</feature>
<feature type="region of interest" description="Disordered" evidence="4">
    <location>
        <begin position="544"/>
        <end position="574"/>
    </location>
</feature>
<feature type="region of interest" description="Disordered" evidence="4">
    <location>
        <begin position="925"/>
        <end position="949"/>
    </location>
</feature>
<feature type="region of interest" description="Disordered" evidence="4">
    <location>
        <begin position="1010"/>
        <end position="1079"/>
    </location>
</feature>
<feature type="compositionally biased region" description="Low complexity" evidence="4">
    <location>
        <begin position="938"/>
        <end position="949"/>
    </location>
</feature>
<feature type="compositionally biased region" description="Basic residues" evidence="4">
    <location>
        <begin position="1062"/>
        <end position="1073"/>
    </location>
</feature>
<feature type="modified residue" description="Phosphoserine" evidence="1">
    <location>
        <position position="1049"/>
    </location>
</feature>
<feature type="modified residue" description="Phosphoserine" evidence="1">
    <location>
        <position position="1050"/>
    </location>
</feature>
<feature type="modified residue" description="Phosphoserine" evidence="1">
    <location>
        <position position="1054"/>
    </location>
</feature>
<feature type="modified residue" description="Phosphoserine" evidence="1">
    <location>
        <position position="1055"/>
    </location>
</feature>
<proteinExistence type="inferred from homology"/>
<evidence type="ECO:0000250" key="1"/>
<evidence type="ECO:0000250" key="2">
    <source>
        <dbReference type="UniProtKB" id="Q68E01"/>
    </source>
</evidence>
<evidence type="ECO:0000250" key="3">
    <source>
        <dbReference type="UniProtKB" id="Q7PLS8"/>
    </source>
</evidence>
<evidence type="ECO:0000256" key="4">
    <source>
        <dbReference type="SAM" id="MobiDB-lite"/>
    </source>
</evidence>
<evidence type="ECO:0000305" key="5"/>
<name>INT3_DROMO</name>
<comment type="function">
    <text evidence="3">Component of the integrator complex, a multiprotein complex that terminates RNA polymerase II (Pol II) transcription in the promoter-proximal region of genes. The integrator complex provides a quality checkpoint during transcription elongation by driving premature transcription termination of transcripts that are unfavorably configured for transcriptional elongation: the complex terminates transcription by (1) catalyzing dephosphorylation of the C-terminal domain (CTD) of Pol II subunit Polr2A/Rbp1 and Spt5, and (2) degrading the exiting nascent RNA transcript via endonuclease activity. The integrator complex is also involved in the 3'-end processing of the U7 snRNA, and also the spliceosomal snRNAs U1, U2, U4 and U5.</text>
</comment>
<comment type="subunit">
    <text evidence="3">Belongs to the multiprotein complex Integrator, at least composed of IntS1, IntS2, IntS3, IntS4, omd/IntS5, IntS6, defl/IntS7, IntS8, IntS9, IntS10, IntS11, IntS12, asun/IntS13, IntS14 and IntS15. The core complex associates with protein phosphatase 2A subunits mts/PP2A and Pp2A-29B, to form the Integrator-PP2A (INTAC) complex.</text>
</comment>
<comment type="subcellular location">
    <subcellularLocation>
        <location evidence="2">Nucleus</location>
    </subcellularLocation>
    <subcellularLocation>
        <location evidence="2">Cytoplasm</location>
    </subcellularLocation>
</comment>
<comment type="similarity">
    <text evidence="5">Belongs to the Integrator subunit 3 family.</text>
</comment>
<accession>B4KJ11</accession>
<dbReference type="EMBL" id="CH933807">
    <property type="protein sequence ID" value="EDW13524.1"/>
    <property type="molecule type" value="Genomic_DNA"/>
</dbReference>
<dbReference type="RefSeq" id="XP_002004082.2">
    <property type="nucleotide sequence ID" value="XM_002004046.2"/>
</dbReference>
<dbReference type="SMR" id="B4KJ11"/>
<dbReference type="FunCoup" id="B4KJ11">
    <property type="interactions" value="1999"/>
</dbReference>
<dbReference type="EnsemblMetazoa" id="FBtr0168981">
    <property type="protein sequence ID" value="FBpp0167473"/>
    <property type="gene ID" value="FBgn0140995"/>
</dbReference>
<dbReference type="EnsemblMetazoa" id="XM_032728631.2">
    <property type="protein sequence ID" value="XP_032584522.1"/>
    <property type="gene ID" value="LOC6578165"/>
</dbReference>
<dbReference type="eggNOG" id="KOG4262">
    <property type="taxonomic scope" value="Eukaryota"/>
</dbReference>
<dbReference type="HOGENOM" id="CLU_007659_0_0_1"/>
<dbReference type="InParanoid" id="B4KJ11"/>
<dbReference type="OMA" id="FEQYCLW"/>
<dbReference type="OrthoDB" id="2021145at2759"/>
<dbReference type="PhylomeDB" id="B4KJ11"/>
<dbReference type="Proteomes" id="UP000009192">
    <property type="component" value="Unassembled WGS sequence"/>
</dbReference>
<dbReference type="GO" id="GO:0005737">
    <property type="term" value="C:cytoplasm"/>
    <property type="evidence" value="ECO:0007669"/>
    <property type="project" value="UniProtKB-SubCell"/>
</dbReference>
<dbReference type="GO" id="GO:0005634">
    <property type="term" value="C:nucleus"/>
    <property type="evidence" value="ECO:0007669"/>
    <property type="project" value="UniProtKB-SubCell"/>
</dbReference>
<dbReference type="InterPro" id="IPR056518">
    <property type="entry name" value="HEAT_Ints3_C"/>
</dbReference>
<dbReference type="InterPro" id="IPR045334">
    <property type="entry name" value="INTS3"/>
</dbReference>
<dbReference type="InterPro" id="IPR019333">
    <property type="entry name" value="INTS3_N"/>
</dbReference>
<dbReference type="PANTHER" id="PTHR13587">
    <property type="entry name" value="INTEGRATOR COMPLEX SUBUNIT 3"/>
    <property type="match status" value="1"/>
</dbReference>
<dbReference type="PANTHER" id="PTHR13587:SF7">
    <property type="entry name" value="INTEGRATOR COMPLEX SUBUNIT 3"/>
    <property type="match status" value="1"/>
</dbReference>
<dbReference type="Pfam" id="PF24566">
    <property type="entry name" value="HEAT_Ints3_C"/>
    <property type="match status" value="1"/>
</dbReference>
<dbReference type="Pfam" id="PF10189">
    <property type="entry name" value="Ints3_N"/>
    <property type="match status" value="1"/>
</dbReference>
<organism>
    <name type="scientific">Drosophila mojavensis</name>
    <name type="common">Fruit fly</name>
    <dbReference type="NCBI Taxonomy" id="7230"/>
    <lineage>
        <taxon>Eukaryota</taxon>
        <taxon>Metazoa</taxon>
        <taxon>Ecdysozoa</taxon>
        <taxon>Arthropoda</taxon>
        <taxon>Hexapoda</taxon>
        <taxon>Insecta</taxon>
        <taxon>Pterygota</taxon>
        <taxon>Neoptera</taxon>
        <taxon>Endopterygota</taxon>
        <taxon>Diptera</taxon>
        <taxon>Brachycera</taxon>
        <taxon>Muscomorpha</taxon>
        <taxon>Ephydroidea</taxon>
        <taxon>Drosophilidae</taxon>
        <taxon>Drosophila</taxon>
    </lineage>
</organism>
<sequence length="1079" mass="124292">MEQQQQKSAVHVSKLFVCTAVDCKDEIEEKFERSYASLQQQIAGLSDKEMHDMLTQFVCKEKQHEEISIGFLYIILTDPAMAPKTYRDITLVSRDGMNVIVANLTLLVAEKYTKLTETARRQLIWVLREFVKHQVLSVENVIWNCLRQAGGGDVSHKNLFLVESLLDIFIEYRAWLETNPFLVQSSVYSFVRLIEDHANPALISLRQKEVKFTISLIRDRFHDIIPLGRDFVRLLQNVARIPEFEQLWRDILYNPKSLHPTFNGIWHLLQIRTSRRFLQCRLLPEMERKLHFLASSVKFGNQKRYQDWFQDKYFATPESHSLRSDLIRFIINVIHPTNDMLCSDIIPRWAIIGWLISSCTNPIASANAKLSLFYDWLFFDPAKDNIMNIEPGILVMYHSIRNHPFVSSTLLDFLCRITKNFYIKNEDKIRLGVYNSLKLILDKQVIPNLHPLFESPKLDRELRNLIRENFREFVSPVSNMPQTMYPATHSIQAPIFKKEADQRITQIENIDVGAGVLAANSSTISLVDDDSKVATIPTESLERETEAVFSDEDGENLGRCTKNEENTDDDDDLPLSKVRLKEKPVPEKVELPEAIAESFEIFVTKRNSFTWEAFLKDFRTLPASTLDETQLNYVISNTVLILRETLPQQNVFSESKTEEKCLAKSISYPLYGLFRFLYENEDKSKKPFQSLLSEICERLSETGYLLLYFMKIHCKLQTRKNAQQSYQFKTTVYRQICEATDGKIASCLVRDLDLLEKENTTIYLWLLPDIYREFKTIAINNTDLLRITLRCVDAKNVRDIMYSIAQGKMTIFKQDGLIECIRESLEYETYEQFCLWQLIQAHDVPLKCIQDILPELEAANHPEALSHLLLLLKNEEPTNEIIRLLLSREAKSRGDPFVTSALRFWCQRCEEKLSEIIASLLTSKYPSSSPNKRKRPSKGSSAASSTPSADHVLNHLEHYRRSCRHGTGTGLYVHDMMQRALQSAYTHSNESTKKQFSDLFALAAEDETTAVGRRGGSGRGRKQPAGKKDSNNHSAGSKKNSDVVKAIYSSDESSSEEDWSKHKITQAAKKRKKAINDSD</sequence>
<gene>
    <name type="primary">IntS3</name>
    <name type="ORF">GI18256</name>
</gene>
<reference key="1">
    <citation type="journal article" date="2007" name="Nature">
        <title>Evolution of genes and genomes on the Drosophila phylogeny.</title>
        <authorList>
            <consortium name="Drosophila 12 genomes consortium"/>
        </authorList>
    </citation>
    <scope>NUCLEOTIDE SEQUENCE [LARGE SCALE GENOMIC DNA]</scope>
    <source>
        <strain>Tucson 15081-1352.22</strain>
    </source>
</reference>
<protein>
    <recommendedName>
        <fullName>Integrator complex subunit 3 homolog</fullName>
    </recommendedName>
    <alternativeName>
        <fullName>SOSS complex subunit A homolog</fullName>
    </alternativeName>
</protein>